<keyword id="KW-1003">Cell membrane</keyword>
<keyword id="KW-1015">Disulfide bond</keyword>
<keyword id="KW-0325">Glycoprotein</keyword>
<keyword id="KW-0472">Membrane</keyword>
<keyword id="KW-1185">Reference proteome</keyword>
<keyword id="KW-0812">Transmembrane</keyword>
<keyword id="KW-1133">Transmembrane helix</keyword>
<name>TSN5_MOUSE</name>
<evidence type="ECO:0000250" key="1">
    <source>
        <dbReference type="UniProtKB" id="O95858"/>
    </source>
</evidence>
<evidence type="ECO:0000250" key="2">
    <source>
        <dbReference type="UniProtKB" id="P62079"/>
    </source>
</evidence>
<evidence type="ECO:0000255" key="3"/>
<evidence type="ECO:0000269" key="4">
    <source>
    </source>
</evidence>
<evidence type="ECO:0000269" key="5">
    <source>
    </source>
</evidence>
<evidence type="ECO:0000305" key="6"/>
<sequence length="268" mass="30337">MSGKHYKGPEVSCCIKYFIFGFNVIFWFLGITFLGIGLWAWNEKGVLSNISSITDLGGFDPVWLFLVVGGVMFILGFAGCIGALRENTFLLKFFSVFLGIIFFLELTAGVLAFVFKDWIKDQLYFFINNNIRAYRDDIDLQNLIDFTQEYWQCCGAFGADDWNLNIYFNCTDSNASRERCGVPFSCCTKDPAEDVINTQCGYDARQKPEVDQQIVIYTKGCVPQFEKWLQDNLTIVAGIFIGIALLQIFGICLAQNLVSDIEAVRASW</sequence>
<gene>
    <name type="primary">Tspan5</name>
    <name type="synonym">Tm4sf9</name>
</gene>
<comment type="function">
    <text evidence="2">Regulates ADAM10 maturation and trafficking to the cell surface (PubMed:23035126). Promotes ADAM10-mediated cleavage of CD44 (By similarity).</text>
</comment>
<comment type="function">
    <text evidence="2 4">Part of TspanC8 subgroup, composed of 6 members that interact with the transmembrane metalloprotease ADAM10. This interaction is required for ADAM10 exit from the endoplasmic reticulum and for enzymatic maturation and trafficking to the cell surface as well as substrate specificity. Different TspanC8/ADAM10 complexes have distinct substrates (PubMed:23035126). Promotes ADAM10-mediated cleavage of CD44. Seems to regulate VE-cadherin expression in endothelial cells probably through interaction with ADAM10, promoting leukocyte transmigration (By similarity).</text>
</comment>
<comment type="subunit">
    <text evidence="4 5">Interacts with ADAM10; the interaction influences ADAM10 substrate specificity, endocytosis and turnover.</text>
</comment>
<comment type="subcellular location">
    <subcellularLocation>
        <location evidence="2">Cell membrane</location>
        <topology evidence="6">Multi-pass membrane protein</topology>
    </subcellularLocation>
</comment>
<comment type="PTM">
    <text evidence="2">Palmitoylated.</text>
</comment>
<comment type="similarity">
    <text evidence="6">Belongs to the tetraspanin (TM4SF) family.</text>
</comment>
<protein>
    <recommendedName>
        <fullName>Tetraspanin-5</fullName>
        <shortName>Tspan-5</shortName>
    </recommendedName>
    <alternativeName>
        <fullName>Tetraspan NET-4</fullName>
    </alternativeName>
    <alternativeName>
        <fullName>Transmembrane 4 superfamily member 9</fullName>
    </alternativeName>
</protein>
<proteinExistence type="evidence at protein level"/>
<feature type="chain" id="PRO_0000219244" description="Tetraspanin-5">
    <location>
        <begin position="1"/>
        <end position="268"/>
    </location>
</feature>
<feature type="topological domain" description="Cytoplasmic" evidence="3">
    <location>
        <begin position="1"/>
        <end position="17"/>
    </location>
</feature>
<feature type="transmembrane region" description="Helical" evidence="3">
    <location>
        <begin position="18"/>
        <end position="38"/>
    </location>
</feature>
<feature type="topological domain" description="Extracellular" evidence="3">
    <location>
        <begin position="39"/>
        <end position="61"/>
    </location>
</feature>
<feature type="transmembrane region" description="Helical" evidence="3">
    <location>
        <begin position="62"/>
        <end position="82"/>
    </location>
</feature>
<feature type="topological domain" description="Cytoplasmic" evidence="3">
    <location>
        <begin position="83"/>
        <end position="92"/>
    </location>
</feature>
<feature type="transmembrane region" description="Helical" evidence="3">
    <location>
        <begin position="93"/>
        <end position="113"/>
    </location>
</feature>
<feature type="topological domain" description="Extracellular" evidence="3">
    <location>
        <begin position="114"/>
        <end position="232"/>
    </location>
</feature>
<feature type="transmembrane region" description="Helical" evidence="3">
    <location>
        <begin position="233"/>
        <end position="253"/>
    </location>
</feature>
<feature type="topological domain" description="Cytoplasmic" evidence="3">
    <location>
        <begin position="254"/>
        <end position="268"/>
    </location>
</feature>
<feature type="glycosylation site" description="N-linked (GlcNAc...) asparagine" evidence="3">
    <location>
        <position position="49"/>
    </location>
</feature>
<feature type="glycosylation site" description="N-linked (GlcNAc...) asparagine" evidence="3">
    <location>
        <position position="169"/>
    </location>
</feature>
<feature type="glycosylation site" description="N-linked (GlcNAc...) asparagine" evidence="3">
    <location>
        <position position="174"/>
    </location>
</feature>
<feature type="glycosylation site" description="N-linked (GlcNAc...) asparagine" evidence="3">
    <location>
        <position position="232"/>
    </location>
</feature>
<feature type="disulfide bond" evidence="1">
    <location>
        <begin position="153"/>
        <end position="221"/>
    </location>
</feature>
<feature type="disulfide bond" evidence="1">
    <location>
        <begin position="154"/>
        <end position="186"/>
    </location>
</feature>
<feature type="disulfide bond" evidence="1">
    <location>
        <begin position="170"/>
        <end position="180"/>
    </location>
</feature>
<feature type="disulfide bond" evidence="1">
    <location>
        <begin position="187"/>
        <end position="200"/>
    </location>
</feature>
<feature type="sequence conflict" description="In Ref. 2; AAH58695." evidence="6" ref="2">
    <original>G</original>
    <variation>E</variation>
    <location>
        <position position="30"/>
    </location>
</feature>
<reference key="1">
    <citation type="submission" date="1999-01" db="EMBL/GenBank/DDBJ databases">
        <title>Mouse Tspan-5 cDNA cloning.</title>
        <authorList>
            <person name="Garcia-Frigola C."/>
            <person name="de Lecea L."/>
            <person name="Soriano E."/>
        </authorList>
    </citation>
    <scope>NUCLEOTIDE SEQUENCE [MRNA]</scope>
    <source>
        <strain>Swiss Webster / NIH</strain>
    </source>
</reference>
<reference key="2">
    <citation type="journal article" date="2004" name="Genome Res.">
        <title>The status, quality, and expansion of the NIH full-length cDNA project: the Mammalian Gene Collection (MGC).</title>
        <authorList>
            <consortium name="The MGC Project Team"/>
        </authorList>
    </citation>
    <scope>NUCLEOTIDE SEQUENCE [LARGE SCALE MRNA]</scope>
    <source>
        <tissue>Brain</tissue>
    </source>
</reference>
<reference key="3">
    <citation type="journal article" date="2012" name="J. Biol. Chem.">
        <title>The TspanC8 subgroup of tetraspanins interacts with A disintegrin and metalloprotease 10 (ADAM10) and regulates its maturation and cell surface expression.</title>
        <authorList>
            <person name="Haining E.J."/>
            <person name="Yang J."/>
            <person name="Bailey R.L."/>
            <person name="Khan K."/>
            <person name="Collier R."/>
            <person name="Tsai S."/>
            <person name="Watson S.P."/>
            <person name="Frampton J."/>
            <person name="Garcia P."/>
            <person name="Tomlinson M.G."/>
        </authorList>
    </citation>
    <scope>FUNCTION</scope>
    <scope>INTERACTION WITH ADAM10</scope>
</reference>
<reference key="4">
    <citation type="journal article" date="2016" name="J. Biol. Chem.">
        <title>TspanC8 tetraspanins and A disintegrin and metalloprotease 10 (ADAM10) interact via their extracellular regions: evidence for distinct binding mechanisms for different TspanC8 proteins.</title>
        <authorList>
            <person name="Noy P.J."/>
            <person name="Yang J."/>
            <person name="Reyat J.S."/>
            <person name="Matthews A.L."/>
            <person name="Charlton A.E."/>
            <person name="Furmston J."/>
            <person name="Rogers D.A."/>
            <person name="Rainger G.E."/>
            <person name="Tomlinson M.G."/>
        </authorList>
    </citation>
    <scope>INTERACTION WITH ADAM10</scope>
</reference>
<accession>P62080</accession>
<accession>O60628</accession>
<accession>O60746</accession>
<accession>Q9JLY1</accession>
<organism>
    <name type="scientific">Mus musculus</name>
    <name type="common">Mouse</name>
    <dbReference type="NCBI Taxonomy" id="10090"/>
    <lineage>
        <taxon>Eukaryota</taxon>
        <taxon>Metazoa</taxon>
        <taxon>Chordata</taxon>
        <taxon>Craniata</taxon>
        <taxon>Vertebrata</taxon>
        <taxon>Euteleostomi</taxon>
        <taxon>Mammalia</taxon>
        <taxon>Eutheria</taxon>
        <taxon>Euarchontoglires</taxon>
        <taxon>Glires</taxon>
        <taxon>Rodentia</taxon>
        <taxon>Myomorpha</taxon>
        <taxon>Muroidea</taxon>
        <taxon>Muridae</taxon>
        <taxon>Murinae</taxon>
        <taxon>Mus</taxon>
        <taxon>Mus</taxon>
    </lineage>
</organism>
<dbReference type="EMBL" id="AF121344">
    <property type="protein sequence ID" value="AAF28869.1"/>
    <property type="molecule type" value="mRNA"/>
</dbReference>
<dbReference type="EMBL" id="BC058695">
    <property type="protein sequence ID" value="AAH58695.1"/>
    <property type="molecule type" value="mRNA"/>
</dbReference>
<dbReference type="CCDS" id="CCDS17870.1"/>
<dbReference type="RefSeq" id="NP_062517.1">
    <property type="nucleotide sequence ID" value="NM_019571.6"/>
</dbReference>
<dbReference type="SMR" id="P62080"/>
<dbReference type="BioGRID" id="207858">
    <property type="interactions" value="1"/>
</dbReference>
<dbReference type="FunCoup" id="P62080">
    <property type="interactions" value="1194"/>
</dbReference>
<dbReference type="STRING" id="10090.ENSMUSP00000029800"/>
<dbReference type="GlyCosmos" id="P62080">
    <property type="glycosylation" value="4 sites, No reported glycans"/>
</dbReference>
<dbReference type="GlyGen" id="P62080">
    <property type="glycosylation" value="4 sites"/>
</dbReference>
<dbReference type="PhosphoSitePlus" id="P62080"/>
<dbReference type="SwissPalm" id="P62080"/>
<dbReference type="PaxDb" id="10090-ENSMUSP00000029800"/>
<dbReference type="ProteomicsDB" id="297994"/>
<dbReference type="Pumba" id="P62080"/>
<dbReference type="Antibodypedia" id="25821">
    <property type="antibodies" value="171 antibodies from 27 providers"/>
</dbReference>
<dbReference type="DNASU" id="56224"/>
<dbReference type="Ensembl" id="ENSMUST00000029800.9">
    <property type="protein sequence ID" value="ENSMUSP00000029800.3"/>
    <property type="gene ID" value="ENSMUSG00000028152.11"/>
</dbReference>
<dbReference type="GeneID" id="56224"/>
<dbReference type="KEGG" id="mmu:56224"/>
<dbReference type="UCSC" id="uc008rnp.2">
    <property type="organism name" value="mouse"/>
</dbReference>
<dbReference type="AGR" id="MGI:1928096"/>
<dbReference type="CTD" id="10098"/>
<dbReference type="MGI" id="MGI:1928096">
    <property type="gene designation" value="Tspan5"/>
</dbReference>
<dbReference type="VEuPathDB" id="HostDB:ENSMUSG00000028152"/>
<dbReference type="eggNOG" id="KOG3882">
    <property type="taxonomic scope" value="Eukaryota"/>
</dbReference>
<dbReference type="GeneTree" id="ENSGT00940000161376"/>
<dbReference type="HOGENOM" id="CLU_055524_0_2_1"/>
<dbReference type="InParanoid" id="P62080"/>
<dbReference type="OMA" id="DPMYGFI"/>
<dbReference type="OrthoDB" id="2014092at2759"/>
<dbReference type="PhylomeDB" id="P62080"/>
<dbReference type="TreeFam" id="TF313002"/>
<dbReference type="BioGRID-ORCS" id="56224">
    <property type="hits" value="1 hit in 79 CRISPR screens"/>
</dbReference>
<dbReference type="ChiTaRS" id="Tspan5">
    <property type="organism name" value="mouse"/>
</dbReference>
<dbReference type="PRO" id="PR:P62080"/>
<dbReference type="Proteomes" id="UP000000589">
    <property type="component" value="Chromosome 3"/>
</dbReference>
<dbReference type="RNAct" id="P62080">
    <property type="molecule type" value="protein"/>
</dbReference>
<dbReference type="Bgee" id="ENSMUSG00000028152">
    <property type="expression patterns" value="Expressed in olfactory bulb mitral cell layer and 276 other cell types or tissues"/>
</dbReference>
<dbReference type="ExpressionAtlas" id="P62080">
    <property type="expression patterns" value="baseline and differential"/>
</dbReference>
<dbReference type="GO" id="GO:0005654">
    <property type="term" value="C:nucleoplasm"/>
    <property type="evidence" value="ECO:0007669"/>
    <property type="project" value="Ensembl"/>
</dbReference>
<dbReference type="GO" id="GO:0005886">
    <property type="term" value="C:plasma membrane"/>
    <property type="evidence" value="ECO:0000250"/>
    <property type="project" value="UniProtKB"/>
</dbReference>
<dbReference type="GO" id="GO:0019899">
    <property type="term" value="F:enzyme binding"/>
    <property type="evidence" value="ECO:0000353"/>
    <property type="project" value="UniProtKB"/>
</dbReference>
<dbReference type="GO" id="GO:0045747">
    <property type="term" value="P:positive regulation of Notch signaling pathway"/>
    <property type="evidence" value="ECO:0007669"/>
    <property type="project" value="Ensembl"/>
</dbReference>
<dbReference type="GO" id="GO:0072659">
    <property type="term" value="P:protein localization to plasma membrane"/>
    <property type="evidence" value="ECO:0007669"/>
    <property type="project" value="Ensembl"/>
</dbReference>
<dbReference type="GO" id="GO:0051604">
    <property type="term" value="P:protein maturation"/>
    <property type="evidence" value="ECO:0000314"/>
    <property type="project" value="UniProtKB"/>
</dbReference>
<dbReference type="GO" id="GO:0051043">
    <property type="term" value="P:regulation of membrane protein ectodomain proteolysis"/>
    <property type="evidence" value="ECO:0000250"/>
    <property type="project" value="UniProtKB"/>
</dbReference>
<dbReference type="CDD" id="cd03159">
    <property type="entry name" value="TM4SF9_like_LEL"/>
    <property type="match status" value="1"/>
</dbReference>
<dbReference type="FunFam" id="1.10.1450.10:FF:000001">
    <property type="entry name" value="Tetraspanin"/>
    <property type="match status" value="1"/>
</dbReference>
<dbReference type="Gene3D" id="1.10.1450.10">
    <property type="entry name" value="Tetraspanin"/>
    <property type="match status" value="1"/>
</dbReference>
<dbReference type="InterPro" id="IPR018499">
    <property type="entry name" value="Tetraspanin/Peripherin"/>
</dbReference>
<dbReference type="InterPro" id="IPR000301">
    <property type="entry name" value="Tetraspanin_animals"/>
</dbReference>
<dbReference type="InterPro" id="IPR018503">
    <property type="entry name" value="Tetraspanin_CS"/>
</dbReference>
<dbReference type="InterPro" id="IPR008952">
    <property type="entry name" value="Tetraspanin_EC2_sf"/>
</dbReference>
<dbReference type="PANTHER" id="PTHR19282">
    <property type="entry name" value="TETRASPANIN"/>
    <property type="match status" value="1"/>
</dbReference>
<dbReference type="PANTHER" id="PTHR19282:SF63">
    <property type="entry name" value="TETRASPANIN-5"/>
    <property type="match status" value="1"/>
</dbReference>
<dbReference type="Pfam" id="PF00335">
    <property type="entry name" value="Tetraspanin"/>
    <property type="match status" value="1"/>
</dbReference>
<dbReference type="PIRSF" id="PIRSF002419">
    <property type="entry name" value="Tetraspanin"/>
    <property type="match status" value="1"/>
</dbReference>
<dbReference type="PRINTS" id="PR00259">
    <property type="entry name" value="TMFOUR"/>
</dbReference>
<dbReference type="SUPFAM" id="SSF48652">
    <property type="entry name" value="Tetraspanin"/>
    <property type="match status" value="1"/>
</dbReference>
<dbReference type="PROSITE" id="PS00421">
    <property type="entry name" value="TM4_1"/>
    <property type="match status" value="1"/>
</dbReference>